<protein>
    <recommendedName>
        <fullName evidence="8">G-protein coupled receptor moody</fullName>
    </recommendedName>
</protein>
<evidence type="ECO:0000255" key="1"/>
<evidence type="ECO:0000255" key="2">
    <source>
        <dbReference type="PROSITE-ProRule" id="PRU00521"/>
    </source>
</evidence>
<evidence type="ECO:0000256" key="3">
    <source>
        <dbReference type="SAM" id="MobiDB-lite"/>
    </source>
</evidence>
<evidence type="ECO:0000269" key="4">
    <source>
    </source>
</evidence>
<evidence type="ECO:0000269" key="5">
    <source>
    </source>
</evidence>
<evidence type="ECO:0000269" key="6">
    <source>
    </source>
</evidence>
<evidence type="ECO:0000269" key="7">
    <source>
    </source>
</evidence>
<evidence type="ECO:0000303" key="8">
    <source>
    </source>
</evidence>
<evidence type="ECO:0000305" key="9"/>
<evidence type="ECO:0000312" key="10">
    <source>
        <dbReference type="EMBL" id="AAF45709.2"/>
    </source>
</evidence>
<evidence type="ECO:0000312" key="11">
    <source>
        <dbReference type="EMBL" id="AAM51987.1"/>
    </source>
</evidence>
<evidence type="ECO:0000312" key="12">
    <source>
        <dbReference type="EMBL" id="CAA21123.1"/>
    </source>
</evidence>
<evidence type="ECO:0000312" key="13">
    <source>
        <dbReference type="FlyBase" id="FBgn0025631"/>
    </source>
</evidence>
<name>MOODY_DROME</name>
<comment type="function">
    <text evidence="6 7">Isoform A and isoform B are required in glia to regulate the acute sensitivity to cocaine and to continuously maintain the proper blood-brain barrier (BBB) function. A moody-mediated signaling pathway functions in glia to regulate nervous system insulation and drug-related behaviors. Galphai and Galphao, and the regulator of G protein signaling, loco, are required in the surface glia to achieve effective insulation. The components function by regulating the cortical actin and thereby stabilizing the extended morphology of the surface glia, which in turn is necessary for the formation of septate junctions of sufficient length to achieve proper sealing of the nerve cord.</text>
</comment>
<comment type="subcellular location">
    <subcellularLocation>
        <location evidence="7">Cell membrane</location>
        <topology evidence="7">Multi-pass membrane protein</topology>
    </subcellularLocation>
</comment>
<comment type="alternative products">
    <event type="alternative splicing"/>
    <isoform>
        <id>Q9W534-1</id>
        <name evidence="7">A</name>
        <name evidence="7">alpha</name>
        <sequence type="displayed"/>
    </isoform>
    <isoform>
        <id>Q9W534-2</id>
        <name evidence="7">B</name>
        <name evidence="7">beta</name>
        <sequence type="described" ref="VSP_052910 VSP_052911"/>
    </isoform>
</comment>
<comment type="tissue specificity">
    <text evidence="6 7">Isoform A and isoform B are expressed in the head. Isoform B only is expressed in the body. Expressed in embryonic glial cells that are involved in ensheathment and insulation of the nervous system. Both isoforms are expressed in glia that insulate the larval and adult nervous system. Also expressed in the germ cells, the gut, and the heart.</text>
</comment>
<comment type="developmental stage">
    <text evidence="7">Expressed throughout development and in adults.</text>
</comment>
<comment type="disruption phenotype">
    <text evidence="7">Mutant flies display an increased sensitivity to cocaine and nicotine exposure. In contrast, sensitivity to the acute intoxicating effects of ethanol is reduced.</text>
</comment>
<comment type="similarity">
    <text evidence="2">Belongs to the G-protein coupled receptor 1 family.</text>
</comment>
<sequence length="670" mass="71932">MSDETTISLEDGYPPLEALTTMVPPADATGFSQSLLTFAAVMTFLIMIVGICGNLLTVVALLKCPKVRNVAAAFIISLCIADLLFCALVLPFQGLRFVQGTWRHGQVLCRLIPFIQYGNIGVSLLCIAMITINRYVMITHHGLYARIYKRHWIAVMIAACWLFSYGMQLPTLLGEWGRFGYDSRLQTCSIMTDDHGHSSKTTLFITAFVIPCLVIIACYAKIFWVVHKSEQRLKRHATKQNSIPNNLRPLASTGSGALPSGAECQPSNRVSSDSSSSFSIDVPETAPSGKQQPTRVKDQREVRAKRNEWRITKMVLAIFLSFVVCYLPITIVKVADKNVEHPSLHICSYILLYLSACINPIIYVIMNKQYRKAYKTVVFCQPARLLLPFGKTNGASSAAEKWKDTGLSNNHSRTIVSQMSGGTGAASGAGTATGTAAVAVMQTPPEVQQAQALEMVSRGPDLISKSNLPQPNVTPPPPSVLTATPNGSNSNSLTLRLPLKKNNHCYTNSGFNSSTPSPSSGLGIGISSSSIYRPGVGSLGSGSASIRRITMVGDDIILEEEELPPTPPATSAPTTPAPPPPSSPLHPLSTDSSTTTISGGAVVAGSSAPKPATPTPHIYMNVDSPKRNQYYMDRNTNAVAPESDSGPANTSATVSISGSKLTAKMKFPKD</sequence>
<dbReference type="EMBL" id="AE014298">
    <property type="protein sequence ID" value="AAF45709.2"/>
    <property type="molecule type" value="Genomic_DNA"/>
</dbReference>
<dbReference type="EMBL" id="AL031765">
    <property type="protein sequence ID" value="CAA21123.1"/>
    <property type="molecule type" value="Genomic_DNA"/>
</dbReference>
<dbReference type="EMBL" id="AY121660">
    <property type="protein sequence ID" value="AAM51987.1"/>
    <property type="molecule type" value="mRNA"/>
</dbReference>
<dbReference type="PIR" id="T13739">
    <property type="entry name" value="T13739"/>
</dbReference>
<dbReference type="RefSeq" id="NP_001188534.1">
    <molecule id="Q9W534-1"/>
    <property type="nucleotide sequence ID" value="NM_001201605.2"/>
</dbReference>
<dbReference type="RefSeq" id="NP_001259170.1">
    <molecule id="Q9W534-1"/>
    <property type="nucleotide sequence ID" value="NM_001272241.2"/>
</dbReference>
<dbReference type="RefSeq" id="NP_001259171.1">
    <molecule id="Q9W534-1"/>
    <property type="nucleotide sequence ID" value="NM_001272242.2"/>
</dbReference>
<dbReference type="RefSeq" id="NP_569970.2">
    <molecule id="Q9W534-1"/>
    <property type="nucleotide sequence ID" value="NM_130614.4"/>
</dbReference>
<dbReference type="SMR" id="Q9W534"/>
<dbReference type="BioGRID" id="57712">
    <property type="interactions" value="1"/>
</dbReference>
<dbReference type="FunCoup" id="Q9W534">
    <property type="interactions" value="70"/>
</dbReference>
<dbReference type="STRING" id="7227.FBpp0292162"/>
<dbReference type="TCDB" id="1.H.2.1.1">
    <property type="family name" value="the invertebrate pmp22-claudin (claudin2) family"/>
</dbReference>
<dbReference type="GlyGen" id="Q9W534">
    <property type="glycosylation" value="1 site"/>
</dbReference>
<dbReference type="PaxDb" id="7227-FBpp0292162"/>
<dbReference type="EnsemblMetazoa" id="FBtr0070341">
    <molecule id="Q9W534-1"/>
    <property type="protein sequence ID" value="FBpp0070327"/>
    <property type="gene ID" value="FBgn0025631"/>
</dbReference>
<dbReference type="EnsemblMetazoa" id="FBtr0303043">
    <molecule id="Q9W534-1"/>
    <property type="protein sequence ID" value="FBpp0292162"/>
    <property type="gene ID" value="FBgn0025631"/>
</dbReference>
<dbReference type="EnsemblMetazoa" id="FBtr0310288">
    <molecule id="Q9W534-1"/>
    <property type="protein sequence ID" value="FBpp0301971"/>
    <property type="gene ID" value="FBgn0025631"/>
</dbReference>
<dbReference type="EnsemblMetazoa" id="FBtr0310289">
    <molecule id="Q9W534-1"/>
    <property type="protein sequence ID" value="FBpp0301972"/>
    <property type="gene ID" value="FBgn0025631"/>
</dbReference>
<dbReference type="GeneID" id="31168"/>
<dbReference type="KEGG" id="dme:Dmel_CG4322"/>
<dbReference type="UCSC" id="CG4322-RA">
    <molecule id="Q9W534-1"/>
    <property type="organism name" value="d. melanogaster"/>
</dbReference>
<dbReference type="AGR" id="FB:FBgn0025631"/>
<dbReference type="CTD" id="31168"/>
<dbReference type="FlyBase" id="FBgn0025631">
    <property type="gene designation" value="moody"/>
</dbReference>
<dbReference type="VEuPathDB" id="VectorBase:FBgn0025631"/>
<dbReference type="eggNOG" id="KOG3656">
    <property type="taxonomic scope" value="Eukaryota"/>
</dbReference>
<dbReference type="GeneTree" id="ENSGT00940000170714"/>
<dbReference type="HOGENOM" id="CLU_421673_0_0_1"/>
<dbReference type="InParanoid" id="Q9W534"/>
<dbReference type="OMA" id="QTCSIMS"/>
<dbReference type="OrthoDB" id="10044919at2759"/>
<dbReference type="PhylomeDB" id="Q9W534"/>
<dbReference type="Reactome" id="R-DME-373076">
    <property type="pathway name" value="Class A/1 (Rhodopsin-like receptors)"/>
</dbReference>
<dbReference type="Reactome" id="R-DME-375276">
    <property type="pathway name" value="Peptide ligand-binding receptors"/>
</dbReference>
<dbReference type="Reactome" id="R-DME-416476">
    <property type="pathway name" value="G alpha (q) signalling events"/>
</dbReference>
<dbReference type="Reactome" id="R-DME-418555">
    <property type="pathway name" value="G alpha (s) signalling events"/>
</dbReference>
<dbReference type="Reactome" id="R-DME-418594">
    <property type="pathway name" value="G alpha (i) signalling events"/>
</dbReference>
<dbReference type="Reactome" id="R-DME-8856825">
    <property type="pathway name" value="Cargo recognition for clathrin-mediated endocytosis"/>
</dbReference>
<dbReference type="Reactome" id="R-DME-8856828">
    <property type="pathway name" value="Clathrin-mediated endocytosis"/>
</dbReference>
<dbReference type="BioGRID-ORCS" id="31168">
    <property type="hits" value="0 hits in 3 CRISPR screens"/>
</dbReference>
<dbReference type="GenomeRNAi" id="31168"/>
<dbReference type="PRO" id="PR:Q9W534"/>
<dbReference type="Proteomes" id="UP000000803">
    <property type="component" value="Chromosome X"/>
</dbReference>
<dbReference type="Bgee" id="FBgn0025631">
    <property type="expression patterns" value="Expressed in subperineurial glial cell (Drosophila) in post-embryonic organism and 166 other cell types or tissues"/>
</dbReference>
<dbReference type="ExpressionAtlas" id="Q9W534">
    <property type="expression patterns" value="baseline and differential"/>
</dbReference>
<dbReference type="GO" id="GO:0016020">
    <property type="term" value="C:membrane"/>
    <property type="evidence" value="ECO:0000250"/>
    <property type="project" value="FlyBase"/>
</dbReference>
<dbReference type="GO" id="GO:0005886">
    <property type="term" value="C:plasma membrane"/>
    <property type="evidence" value="ECO:0000314"/>
    <property type="project" value="FlyBase"/>
</dbReference>
<dbReference type="GO" id="GO:0005919">
    <property type="term" value="C:pleated septate junction"/>
    <property type="evidence" value="ECO:0000314"/>
    <property type="project" value="FlyBase"/>
</dbReference>
<dbReference type="GO" id="GO:0004930">
    <property type="term" value="F:G protein-coupled receptor activity"/>
    <property type="evidence" value="ECO:0000315"/>
    <property type="project" value="UniProtKB"/>
</dbReference>
<dbReference type="GO" id="GO:0008366">
    <property type="term" value="P:axon ensheathment"/>
    <property type="evidence" value="ECO:0000315"/>
    <property type="project" value="UniProtKB"/>
</dbReference>
<dbReference type="GO" id="GO:0048148">
    <property type="term" value="P:behavioral response to cocaine"/>
    <property type="evidence" value="ECO:0000315"/>
    <property type="project" value="UniProtKB"/>
</dbReference>
<dbReference type="GO" id="GO:0048149">
    <property type="term" value="P:behavioral response to ethanol"/>
    <property type="evidence" value="ECO:0000315"/>
    <property type="project" value="FlyBase"/>
</dbReference>
<dbReference type="GO" id="GO:0035095">
    <property type="term" value="P:behavioral response to nicotine"/>
    <property type="evidence" value="ECO:0000315"/>
    <property type="project" value="FlyBase"/>
</dbReference>
<dbReference type="GO" id="GO:0030866">
    <property type="term" value="P:cortical actin cytoskeleton organization"/>
    <property type="evidence" value="ECO:0000315"/>
    <property type="project" value="FlyBase"/>
</dbReference>
<dbReference type="GO" id="GO:0060857">
    <property type="term" value="P:establishment of glial blood-brain barrier"/>
    <property type="evidence" value="ECO:0000315"/>
    <property type="project" value="FlyBase"/>
</dbReference>
<dbReference type="GO" id="GO:0007186">
    <property type="term" value="P:G protein-coupled receptor signaling pathway"/>
    <property type="evidence" value="ECO:0000315"/>
    <property type="project" value="UniProtKB"/>
</dbReference>
<dbReference type="GO" id="GO:0019991">
    <property type="term" value="P:septate junction assembly"/>
    <property type="evidence" value="ECO:0000315"/>
    <property type="project" value="FlyBase"/>
</dbReference>
<dbReference type="GO" id="GO:0007419">
    <property type="term" value="P:ventral cord development"/>
    <property type="evidence" value="ECO:0000315"/>
    <property type="project" value="FlyBase"/>
</dbReference>
<dbReference type="CDD" id="cd15210">
    <property type="entry name" value="7tmA_GPR84-like"/>
    <property type="match status" value="1"/>
</dbReference>
<dbReference type="Gene3D" id="1.20.1070.10">
    <property type="entry name" value="Rhodopsin 7-helix transmembrane proteins"/>
    <property type="match status" value="1"/>
</dbReference>
<dbReference type="InterPro" id="IPR000276">
    <property type="entry name" value="GPCR_Rhodpsn"/>
</dbReference>
<dbReference type="InterPro" id="IPR017452">
    <property type="entry name" value="GPCR_Rhodpsn_7TM"/>
</dbReference>
<dbReference type="PANTHER" id="PTHR24228">
    <property type="entry name" value="B2 BRADYKININ RECEPTOR/ANGIOTENSIN II RECEPTOR"/>
    <property type="match status" value="1"/>
</dbReference>
<dbReference type="PANTHER" id="PTHR24228:SF63">
    <property type="entry name" value="G-PROTEIN COUPLED RECEPTOR MOODY"/>
    <property type="match status" value="1"/>
</dbReference>
<dbReference type="Pfam" id="PF00001">
    <property type="entry name" value="7tm_1"/>
    <property type="match status" value="1"/>
</dbReference>
<dbReference type="PRINTS" id="PR00237">
    <property type="entry name" value="GPCRRHODOPSN"/>
</dbReference>
<dbReference type="SMART" id="SM01381">
    <property type="entry name" value="7TM_GPCR_Srsx"/>
    <property type="match status" value="1"/>
</dbReference>
<dbReference type="SUPFAM" id="SSF81321">
    <property type="entry name" value="Family A G protein-coupled receptor-like"/>
    <property type="match status" value="1"/>
</dbReference>
<dbReference type="PROSITE" id="PS00237">
    <property type="entry name" value="G_PROTEIN_RECEP_F1_1"/>
    <property type="match status" value="1"/>
</dbReference>
<dbReference type="PROSITE" id="PS50262">
    <property type="entry name" value="G_PROTEIN_RECEP_F1_2"/>
    <property type="match status" value="1"/>
</dbReference>
<gene>
    <name evidence="13" type="primary">moody</name>
    <name type="ORF">CG4322</name>
</gene>
<keyword id="KW-0025">Alternative splicing</keyword>
<keyword id="KW-1003">Cell membrane</keyword>
<keyword id="KW-1015">Disulfide bond</keyword>
<keyword id="KW-0297">G-protein coupled receptor</keyword>
<keyword id="KW-0472">Membrane</keyword>
<keyword id="KW-0675">Receptor</keyword>
<keyword id="KW-1185">Reference proteome</keyword>
<keyword id="KW-0807">Transducer</keyword>
<keyword id="KW-0812">Transmembrane</keyword>
<keyword id="KW-1133">Transmembrane helix</keyword>
<reference evidence="10" key="1">
    <citation type="journal article" date="2000" name="Science">
        <title>The genome sequence of Drosophila melanogaster.</title>
        <authorList>
            <person name="Adams M.D."/>
            <person name="Celniker S.E."/>
            <person name="Holt R.A."/>
            <person name="Evans C.A."/>
            <person name="Gocayne J.D."/>
            <person name="Amanatides P.G."/>
            <person name="Scherer S.E."/>
            <person name="Li P.W."/>
            <person name="Hoskins R.A."/>
            <person name="Galle R.F."/>
            <person name="George R.A."/>
            <person name="Lewis S.E."/>
            <person name="Richards S."/>
            <person name="Ashburner M."/>
            <person name="Henderson S.N."/>
            <person name="Sutton G.G."/>
            <person name="Wortman J.R."/>
            <person name="Yandell M.D."/>
            <person name="Zhang Q."/>
            <person name="Chen L.X."/>
            <person name="Brandon R.C."/>
            <person name="Rogers Y.-H.C."/>
            <person name="Blazej R.G."/>
            <person name="Champe M."/>
            <person name="Pfeiffer B.D."/>
            <person name="Wan K.H."/>
            <person name="Doyle C."/>
            <person name="Baxter E.G."/>
            <person name="Helt G."/>
            <person name="Nelson C.R."/>
            <person name="Miklos G.L.G."/>
            <person name="Abril J.F."/>
            <person name="Agbayani A."/>
            <person name="An H.-J."/>
            <person name="Andrews-Pfannkoch C."/>
            <person name="Baldwin D."/>
            <person name="Ballew R.M."/>
            <person name="Basu A."/>
            <person name="Baxendale J."/>
            <person name="Bayraktaroglu L."/>
            <person name="Beasley E.M."/>
            <person name="Beeson K.Y."/>
            <person name="Benos P.V."/>
            <person name="Berman B.P."/>
            <person name="Bhandari D."/>
            <person name="Bolshakov S."/>
            <person name="Borkova D."/>
            <person name="Botchan M.R."/>
            <person name="Bouck J."/>
            <person name="Brokstein P."/>
            <person name="Brottier P."/>
            <person name="Burtis K.C."/>
            <person name="Busam D.A."/>
            <person name="Butler H."/>
            <person name="Cadieu E."/>
            <person name="Center A."/>
            <person name="Chandra I."/>
            <person name="Cherry J.M."/>
            <person name="Cawley S."/>
            <person name="Dahlke C."/>
            <person name="Davenport L.B."/>
            <person name="Davies P."/>
            <person name="de Pablos B."/>
            <person name="Delcher A."/>
            <person name="Deng Z."/>
            <person name="Mays A.D."/>
            <person name="Dew I."/>
            <person name="Dietz S.M."/>
            <person name="Dodson K."/>
            <person name="Doup L.E."/>
            <person name="Downes M."/>
            <person name="Dugan-Rocha S."/>
            <person name="Dunkov B.C."/>
            <person name="Dunn P."/>
            <person name="Durbin K.J."/>
            <person name="Evangelista C.C."/>
            <person name="Ferraz C."/>
            <person name="Ferriera S."/>
            <person name="Fleischmann W."/>
            <person name="Fosler C."/>
            <person name="Gabrielian A.E."/>
            <person name="Garg N.S."/>
            <person name="Gelbart W.M."/>
            <person name="Glasser K."/>
            <person name="Glodek A."/>
            <person name="Gong F."/>
            <person name="Gorrell J.H."/>
            <person name="Gu Z."/>
            <person name="Guan P."/>
            <person name="Harris M."/>
            <person name="Harris N.L."/>
            <person name="Harvey D.A."/>
            <person name="Heiman T.J."/>
            <person name="Hernandez J.R."/>
            <person name="Houck J."/>
            <person name="Hostin D."/>
            <person name="Houston K.A."/>
            <person name="Howland T.J."/>
            <person name="Wei M.-H."/>
            <person name="Ibegwam C."/>
            <person name="Jalali M."/>
            <person name="Kalush F."/>
            <person name="Karpen G.H."/>
            <person name="Ke Z."/>
            <person name="Kennison J.A."/>
            <person name="Ketchum K.A."/>
            <person name="Kimmel B.E."/>
            <person name="Kodira C.D."/>
            <person name="Kraft C.L."/>
            <person name="Kravitz S."/>
            <person name="Kulp D."/>
            <person name="Lai Z."/>
            <person name="Lasko P."/>
            <person name="Lei Y."/>
            <person name="Levitsky A.A."/>
            <person name="Li J.H."/>
            <person name="Li Z."/>
            <person name="Liang Y."/>
            <person name="Lin X."/>
            <person name="Liu X."/>
            <person name="Mattei B."/>
            <person name="McIntosh T.C."/>
            <person name="McLeod M.P."/>
            <person name="McPherson D."/>
            <person name="Merkulov G."/>
            <person name="Milshina N.V."/>
            <person name="Mobarry C."/>
            <person name="Morris J."/>
            <person name="Moshrefi A."/>
            <person name="Mount S.M."/>
            <person name="Moy M."/>
            <person name="Murphy B."/>
            <person name="Murphy L."/>
            <person name="Muzny D.M."/>
            <person name="Nelson D.L."/>
            <person name="Nelson D.R."/>
            <person name="Nelson K.A."/>
            <person name="Nixon K."/>
            <person name="Nusskern D.R."/>
            <person name="Pacleb J.M."/>
            <person name="Palazzolo M."/>
            <person name="Pittman G.S."/>
            <person name="Pan S."/>
            <person name="Pollard J."/>
            <person name="Puri V."/>
            <person name="Reese M.G."/>
            <person name="Reinert K."/>
            <person name="Remington K."/>
            <person name="Saunders R.D.C."/>
            <person name="Scheeler F."/>
            <person name="Shen H."/>
            <person name="Shue B.C."/>
            <person name="Siden-Kiamos I."/>
            <person name="Simpson M."/>
            <person name="Skupski M.P."/>
            <person name="Smith T.J."/>
            <person name="Spier E."/>
            <person name="Spradling A.C."/>
            <person name="Stapleton M."/>
            <person name="Strong R."/>
            <person name="Sun E."/>
            <person name="Svirskas R."/>
            <person name="Tector C."/>
            <person name="Turner R."/>
            <person name="Venter E."/>
            <person name="Wang A.H."/>
            <person name="Wang X."/>
            <person name="Wang Z.-Y."/>
            <person name="Wassarman D.A."/>
            <person name="Weinstock G.M."/>
            <person name="Weissenbach J."/>
            <person name="Williams S.M."/>
            <person name="Woodage T."/>
            <person name="Worley K.C."/>
            <person name="Wu D."/>
            <person name="Yang S."/>
            <person name="Yao Q.A."/>
            <person name="Ye J."/>
            <person name="Yeh R.-F."/>
            <person name="Zaveri J.S."/>
            <person name="Zhan M."/>
            <person name="Zhang G."/>
            <person name="Zhao Q."/>
            <person name="Zheng L."/>
            <person name="Zheng X.H."/>
            <person name="Zhong F.N."/>
            <person name="Zhong W."/>
            <person name="Zhou X."/>
            <person name="Zhu S.C."/>
            <person name="Zhu X."/>
            <person name="Smith H.O."/>
            <person name="Gibbs R.A."/>
            <person name="Myers E.W."/>
            <person name="Rubin G.M."/>
            <person name="Venter J.C."/>
        </authorList>
    </citation>
    <scope>NUCLEOTIDE SEQUENCE [LARGE SCALE GENOMIC DNA]</scope>
    <source>
        <strain>Berkeley</strain>
    </source>
</reference>
<reference evidence="9 10" key="2">
    <citation type="journal article" date="2002" name="Genome Biol.">
        <title>Annotation of the Drosophila melanogaster euchromatic genome: a systematic review.</title>
        <authorList>
            <person name="Misra S."/>
            <person name="Crosby M.A."/>
            <person name="Mungall C.J."/>
            <person name="Matthews B.B."/>
            <person name="Campbell K.S."/>
            <person name="Hradecky P."/>
            <person name="Huang Y."/>
            <person name="Kaminker J.S."/>
            <person name="Millburn G.H."/>
            <person name="Prochnik S.E."/>
            <person name="Smith C.D."/>
            <person name="Tupy J.L."/>
            <person name="Whitfield E.J."/>
            <person name="Bayraktaroglu L."/>
            <person name="Berman B.P."/>
            <person name="Bettencourt B.R."/>
            <person name="Celniker S.E."/>
            <person name="de Grey A.D.N.J."/>
            <person name="Drysdale R.A."/>
            <person name="Harris N.L."/>
            <person name="Richter J."/>
            <person name="Russo S."/>
            <person name="Schroeder A.J."/>
            <person name="Shu S.Q."/>
            <person name="Stapleton M."/>
            <person name="Yamada C."/>
            <person name="Ashburner M."/>
            <person name="Gelbart W.M."/>
            <person name="Rubin G.M."/>
            <person name="Lewis S.E."/>
        </authorList>
    </citation>
    <scope>GENOME REANNOTATION</scope>
    <source>
        <strain>Berkeley</strain>
    </source>
</reference>
<reference evidence="12" key="3">
    <citation type="journal article" date="2000" name="Science">
        <title>From sequence to chromosome: the tip of the X chromosome of D. melanogaster.</title>
        <authorList>
            <person name="Benos P.V."/>
            <person name="Gatt M.K."/>
            <person name="Ashburner M."/>
            <person name="Murphy L."/>
            <person name="Harris D."/>
            <person name="Barrell B.G."/>
            <person name="Ferraz C."/>
            <person name="Vidal S."/>
            <person name="Brun C."/>
            <person name="Demailles J."/>
            <person name="Cadieu E."/>
            <person name="Dreano S."/>
            <person name="Gloux S."/>
            <person name="Lelaure V."/>
            <person name="Mottier S."/>
            <person name="Galibert F."/>
            <person name="Borkova D."/>
            <person name="Minana B."/>
            <person name="Kafatos F.C."/>
            <person name="Louis C."/>
            <person name="Siden-Kiamos I."/>
            <person name="Bolshakov S."/>
            <person name="Papagiannakis G."/>
            <person name="Spanos L."/>
            <person name="Cox S."/>
            <person name="Madueno E."/>
            <person name="de Pablos B."/>
            <person name="Modolell J."/>
            <person name="Peter A."/>
            <person name="Schoettler P."/>
            <person name="Werner M."/>
            <person name="Mourkioti F."/>
            <person name="Beinert N."/>
            <person name="Dowe G."/>
            <person name="Schaefer U."/>
            <person name="Jaeckle H."/>
            <person name="Bucheton A."/>
            <person name="Callister D.M."/>
            <person name="Campbell L.A."/>
            <person name="Darlamitsou A."/>
            <person name="Henderson N.S."/>
            <person name="McMillan P.J."/>
            <person name="Salles C."/>
            <person name="Tait E.A."/>
            <person name="Valenti P."/>
            <person name="Saunders R.D.C."/>
            <person name="Glover D.M."/>
        </authorList>
    </citation>
    <scope>NUCLEOTIDE SEQUENCE [LARGE SCALE GENOMIC DNA]</scope>
    <source>
        <strain evidence="4">Oregon-R</strain>
    </source>
</reference>
<reference evidence="9 11" key="4">
    <citation type="journal article" date="2002" name="Genome Biol.">
        <title>A Drosophila full-length cDNA resource.</title>
        <authorList>
            <person name="Stapleton M."/>
            <person name="Carlson J.W."/>
            <person name="Brokstein P."/>
            <person name="Yu C."/>
            <person name="Champe M."/>
            <person name="George R.A."/>
            <person name="Guarin H."/>
            <person name="Kronmiller B."/>
            <person name="Pacleb J.M."/>
            <person name="Park S."/>
            <person name="Wan K.H."/>
            <person name="Rubin G.M."/>
            <person name="Celniker S.E."/>
        </authorList>
    </citation>
    <scope>NUCLEOTIDE SEQUENCE [LARGE SCALE MRNA] (ISOFORM A)</scope>
    <source>
        <strain evidence="5">Berkeley</strain>
        <tissue evidence="5">Embryo</tissue>
    </source>
</reference>
<reference evidence="9" key="5">
    <citation type="journal article" date="2005" name="Cell">
        <title>GPCR signaling is required for blood-brain barrier formation in Drosophila.</title>
        <authorList>
            <person name="Schwabe T."/>
            <person name="Bainton R.J."/>
            <person name="Fetter R.D."/>
            <person name="Heberlein U."/>
            <person name="Gaul U."/>
        </authorList>
    </citation>
    <scope>FUNCTION</scope>
    <scope>TISSUE SPECIFICITY</scope>
</reference>
<reference evidence="9" key="6">
    <citation type="journal article" date="2005" name="Cell">
        <title>moody encodes two GPCRs that regulate cocaine behaviors and blood-brain barrier permeability in Drosophila.</title>
        <authorList>
            <person name="Bainton R.J."/>
            <person name="Tsai L.T.-Y."/>
            <person name="Schwabe T."/>
            <person name="DeSalvo M."/>
            <person name="Gaul U."/>
            <person name="Heberlein U."/>
        </authorList>
    </citation>
    <scope>FUNCTION</scope>
    <scope>SUBCELLULAR LOCATION</scope>
    <scope>ALTERNATIVE SPLICING</scope>
    <scope>TISSUE SPECIFICITY</scope>
    <scope>DEVELOPMENTAL STAGE</scope>
    <scope>DISRUPTION PHENOTYPE</scope>
</reference>
<feature type="chain" id="PRO_0000355097" description="G-protein coupled receptor moody">
    <location>
        <begin position="1"/>
        <end position="670"/>
    </location>
</feature>
<feature type="topological domain" description="Extracellular" evidence="1">
    <location>
        <begin position="1"/>
        <end position="40"/>
    </location>
</feature>
<feature type="transmembrane region" description="Helical; Name=1" evidence="1">
    <location>
        <begin position="41"/>
        <end position="61"/>
    </location>
</feature>
<feature type="topological domain" description="Cytoplasmic" evidence="1">
    <location>
        <begin position="62"/>
        <end position="69"/>
    </location>
</feature>
<feature type="transmembrane region" description="Helical; Name=2" evidence="1">
    <location>
        <begin position="70"/>
        <end position="90"/>
    </location>
</feature>
<feature type="topological domain" description="Extracellular" evidence="1">
    <location>
        <begin position="91"/>
        <end position="111"/>
    </location>
</feature>
<feature type="transmembrane region" description="Helical; Name=3" evidence="1">
    <location>
        <begin position="112"/>
        <end position="132"/>
    </location>
</feature>
<feature type="topological domain" description="Cytoplasmic" evidence="1">
    <location>
        <begin position="133"/>
        <end position="152"/>
    </location>
</feature>
<feature type="transmembrane region" description="Helical; Name=4" evidence="1">
    <location>
        <begin position="153"/>
        <end position="173"/>
    </location>
</feature>
<feature type="topological domain" description="Extracellular" evidence="1">
    <location>
        <begin position="174"/>
        <end position="202"/>
    </location>
</feature>
<feature type="transmembrane region" description="Helical; Name=5" evidence="1">
    <location>
        <begin position="203"/>
        <end position="223"/>
    </location>
</feature>
<feature type="topological domain" description="Cytoplasmic" evidence="1">
    <location>
        <begin position="224"/>
        <end position="313"/>
    </location>
</feature>
<feature type="transmembrane region" description="Helical; Name=6" evidence="1">
    <location>
        <begin position="314"/>
        <end position="334"/>
    </location>
</feature>
<feature type="topological domain" description="Extracellular" evidence="1">
    <location>
        <begin position="335"/>
        <end position="345"/>
    </location>
</feature>
<feature type="transmembrane region" description="Helical; Name=7" evidence="1">
    <location>
        <begin position="346"/>
        <end position="366"/>
    </location>
</feature>
<feature type="topological domain" description="Cytoplasmic" evidence="1">
    <location>
        <begin position="367"/>
        <end position="670"/>
    </location>
</feature>
<feature type="region of interest" description="Disordered" evidence="3">
    <location>
        <begin position="258"/>
        <end position="302"/>
    </location>
</feature>
<feature type="region of interest" description="Disordered" evidence="3">
    <location>
        <begin position="461"/>
        <end position="490"/>
    </location>
</feature>
<feature type="region of interest" description="Disordered" evidence="3">
    <location>
        <begin position="562"/>
        <end position="622"/>
    </location>
</feature>
<feature type="region of interest" description="Disordered" evidence="3">
    <location>
        <begin position="636"/>
        <end position="670"/>
    </location>
</feature>
<feature type="compositionally biased region" description="Low complexity" evidence="3">
    <location>
        <begin position="267"/>
        <end position="279"/>
    </location>
</feature>
<feature type="compositionally biased region" description="Pro residues" evidence="3">
    <location>
        <begin position="564"/>
        <end position="584"/>
    </location>
</feature>
<feature type="compositionally biased region" description="Low complexity" evidence="3">
    <location>
        <begin position="585"/>
        <end position="598"/>
    </location>
</feature>
<feature type="compositionally biased region" description="Polar residues" evidence="3">
    <location>
        <begin position="646"/>
        <end position="660"/>
    </location>
</feature>
<feature type="disulfide bond" evidence="2">
    <location>
        <begin position="109"/>
        <end position="188"/>
    </location>
</feature>
<feature type="splice variant" id="VSP_052910" description="In isoform B." evidence="8">
    <original>KWKDTGL</original>
    <variation>RNGKIPG</variation>
    <location>
        <begin position="401"/>
        <end position="407"/>
    </location>
</feature>
<feature type="splice variant" id="VSP_052911" description="In isoform B." evidence="8">
    <location>
        <begin position="408"/>
        <end position="670"/>
    </location>
</feature>
<feature type="sequence conflict" description="In Ref. 4; AAM51987." evidence="9" ref="4">
    <original>Q</original>
    <variation>L</variation>
    <location>
        <position position="106"/>
    </location>
</feature>
<feature type="sequence conflict" description="In Ref. 3; CAA21123." evidence="9" ref="3">
    <original>N</original>
    <variation>T</variation>
    <location>
        <position position="472"/>
    </location>
</feature>
<proteinExistence type="evidence at transcript level"/>
<accession>Q9W534</accession>
<accession>O77270</accession>
<accession>Q8MRD0</accession>
<organism>
    <name type="scientific">Drosophila melanogaster</name>
    <name type="common">Fruit fly</name>
    <dbReference type="NCBI Taxonomy" id="7227"/>
    <lineage>
        <taxon>Eukaryota</taxon>
        <taxon>Metazoa</taxon>
        <taxon>Ecdysozoa</taxon>
        <taxon>Arthropoda</taxon>
        <taxon>Hexapoda</taxon>
        <taxon>Insecta</taxon>
        <taxon>Pterygota</taxon>
        <taxon>Neoptera</taxon>
        <taxon>Endopterygota</taxon>
        <taxon>Diptera</taxon>
        <taxon>Brachycera</taxon>
        <taxon>Muscomorpha</taxon>
        <taxon>Ephydroidea</taxon>
        <taxon>Drosophilidae</taxon>
        <taxon>Drosophila</taxon>
        <taxon>Sophophora</taxon>
    </lineage>
</organism>